<protein>
    <recommendedName>
        <fullName evidence="1">Ketol-acid reductoisomerase (NADP(+))</fullName>
        <shortName evidence="1">KARI</shortName>
        <ecNumber evidence="1">1.1.1.86</ecNumber>
    </recommendedName>
    <alternativeName>
        <fullName evidence="1">Acetohydroxy-acid isomeroreductase</fullName>
        <shortName evidence="1">AHIR</shortName>
    </alternativeName>
    <alternativeName>
        <fullName evidence="1">Alpha-keto-beta-hydroxylacyl reductoisomerase</fullName>
    </alternativeName>
    <alternativeName>
        <fullName evidence="1">Ketol-acid reductoisomerase type 2</fullName>
    </alternativeName>
    <alternativeName>
        <fullName evidence="1">Ketol-acid reductoisomerase type II</fullName>
    </alternativeName>
</protein>
<organism>
    <name type="scientific">Buchnera aphidicola subsp. Uroleucon rurale</name>
    <dbReference type="NCBI Taxonomy" id="168386"/>
    <lineage>
        <taxon>Bacteria</taxon>
        <taxon>Pseudomonadati</taxon>
        <taxon>Pseudomonadota</taxon>
        <taxon>Gammaproteobacteria</taxon>
        <taxon>Enterobacterales</taxon>
        <taxon>Erwiniaceae</taxon>
        <taxon>Buchnera</taxon>
    </lineage>
</organism>
<proteinExistence type="inferred from homology"/>
<reference key="1">
    <citation type="submission" date="1999-12" db="EMBL/GenBank/DDBJ databases">
        <title>Accelerated evolutionary rates at biosynthetic loci of Buchnera-Uroleucon.</title>
        <authorList>
            <person name="Wernegreen J.J."/>
            <person name="Moran N.A."/>
        </authorList>
    </citation>
    <scope>NUCLEOTIDE SEQUENCE [GENOMIC DNA]</scope>
</reference>
<feature type="chain" id="PRO_0000151294" description="Ketol-acid reductoisomerase (NADP(+))">
    <location>
        <begin position="1" status="less than"/>
        <end position="346" status="greater than"/>
    </location>
</feature>
<feature type="domain" description="KARI N-terminal Rossmann" evidence="2">
    <location>
        <begin position="1" status="less than"/>
        <end position="141"/>
    </location>
</feature>
<feature type="domain" description="KARI C-terminal knotted 1" evidence="3">
    <location>
        <begin position="142"/>
        <end position="286"/>
    </location>
</feature>
<feature type="domain" description="KARI C-terminal knotted 2" evidence="3">
    <location>
        <begin position="287"/>
        <end position="346" status="greater than"/>
    </location>
</feature>
<feature type="active site" evidence="1">
    <location>
        <position position="65"/>
    </location>
</feature>
<feature type="binding site" evidence="1">
    <location>
        <position position="11"/>
    </location>
    <ligand>
        <name>NADP(+)</name>
        <dbReference type="ChEBI" id="CHEBI:58349"/>
    </ligand>
</feature>
<feature type="binding site" evidence="1">
    <location>
        <begin position="41"/>
        <end position="43"/>
    </location>
    <ligand>
        <name>NADP(+)</name>
        <dbReference type="ChEBI" id="CHEBI:58349"/>
    </ligand>
</feature>
<feature type="binding site" evidence="1">
    <location>
        <position position="91"/>
    </location>
    <ligand>
        <name>NADP(+)</name>
        <dbReference type="ChEBI" id="CHEBI:58349"/>
    </ligand>
</feature>
<feature type="binding site" evidence="3">
    <location>
        <position position="150"/>
    </location>
    <ligand>
        <name>Mg(2+)</name>
        <dbReference type="ChEBI" id="CHEBI:18420"/>
        <label>1</label>
    </ligand>
</feature>
<feature type="binding site" evidence="3">
    <location>
        <position position="150"/>
    </location>
    <ligand>
        <name>Mg(2+)</name>
        <dbReference type="ChEBI" id="CHEBI:18420"/>
        <label>2</label>
    </ligand>
</feature>
<feature type="binding site" evidence="3">
    <location>
        <position position="154"/>
    </location>
    <ligand>
        <name>Mg(2+)</name>
        <dbReference type="ChEBI" id="CHEBI:18420"/>
        <label>1</label>
    </ligand>
</feature>
<feature type="binding site" evidence="3">
    <location>
        <position position="322"/>
    </location>
    <ligand>
        <name>Mg(2+)</name>
        <dbReference type="ChEBI" id="CHEBI:18420"/>
        <label>2</label>
    </ligand>
</feature>
<feature type="binding site" evidence="3">
    <location>
        <position position="326"/>
    </location>
    <ligand>
        <name>Mg(2+)</name>
        <dbReference type="ChEBI" id="CHEBI:18420"/>
        <label>2</label>
    </ligand>
</feature>
<feature type="non-terminal residue">
    <location>
        <position position="1"/>
    </location>
</feature>
<feature type="non-terminal residue">
    <location>
        <position position="346"/>
    </location>
</feature>
<name>ILVC_BUCUL</name>
<gene>
    <name type="primary">ilvC</name>
</gene>
<evidence type="ECO:0000250" key="1">
    <source>
        <dbReference type="UniProtKB" id="P05793"/>
    </source>
</evidence>
<evidence type="ECO:0000255" key="2">
    <source>
        <dbReference type="PROSITE-ProRule" id="PRU01197"/>
    </source>
</evidence>
<evidence type="ECO:0000255" key="3">
    <source>
        <dbReference type="PROSITE-ProRule" id="PRU01198"/>
    </source>
</evidence>
<evidence type="ECO:0000305" key="4"/>
<dbReference type="EC" id="1.1.1.86" evidence="1"/>
<dbReference type="EMBL" id="AF217555">
    <property type="protein sequence ID" value="AAK01026.1"/>
    <property type="molecule type" value="Genomic_DNA"/>
</dbReference>
<dbReference type="UniPathway" id="UPA00047">
    <property type="reaction ID" value="UER00056"/>
</dbReference>
<dbReference type="UniPathway" id="UPA00049">
    <property type="reaction ID" value="UER00060"/>
</dbReference>
<dbReference type="GO" id="GO:0005829">
    <property type="term" value="C:cytosol"/>
    <property type="evidence" value="ECO:0007669"/>
    <property type="project" value="TreeGrafter"/>
</dbReference>
<dbReference type="GO" id="GO:0004455">
    <property type="term" value="F:ketol-acid reductoisomerase activity"/>
    <property type="evidence" value="ECO:0007669"/>
    <property type="project" value="UniProtKB-EC"/>
</dbReference>
<dbReference type="GO" id="GO:0046872">
    <property type="term" value="F:metal ion binding"/>
    <property type="evidence" value="ECO:0007669"/>
    <property type="project" value="UniProtKB-KW"/>
</dbReference>
<dbReference type="GO" id="GO:0050661">
    <property type="term" value="F:NADP binding"/>
    <property type="evidence" value="ECO:0007669"/>
    <property type="project" value="InterPro"/>
</dbReference>
<dbReference type="GO" id="GO:0009097">
    <property type="term" value="P:isoleucine biosynthetic process"/>
    <property type="evidence" value="ECO:0007669"/>
    <property type="project" value="UniProtKB-UniPathway"/>
</dbReference>
<dbReference type="GO" id="GO:0009099">
    <property type="term" value="P:L-valine biosynthetic process"/>
    <property type="evidence" value="ECO:0007669"/>
    <property type="project" value="UniProtKB-UniPathway"/>
</dbReference>
<dbReference type="Gene3D" id="1.10.1040.10">
    <property type="entry name" value="N-(1-d-carboxylethyl)-l-norvaline Dehydrogenase, domain 2"/>
    <property type="match status" value="1"/>
</dbReference>
<dbReference type="Gene3D" id="3.40.50.720">
    <property type="entry name" value="NAD(P)-binding Rossmann-like Domain"/>
    <property type="match status" value="1"/>
</dbReference>
<dbReference type="InterPro" id="IPR008927">
    <property type="entry name" value="6-PGluconate_DH-like_C_sf"/>
</dbReference>
<dbReference type="InterPro" id="IPR013328">
    <property type="entry name" value="6PGD_dom2"/>
</dbReference>
<dbReference type="InterPro" id="IPR013023">
    <property type="entry name" value="KARI"/>
</dbReference>
<dbReference type="InterPro" id="IPR000506">
    <property type="entry name" value="KARI_C"/>
</dbReference>
<dbReference type="InterPro" id="IPR013116">
    <property type="entry name" value="KARI_N"/>
</dbReference>
<dbReference type="InterPro" id="IPR014359">
    <property type="entry name" value="KARI_prok"/>
</dbReference>
<dbReference type="InterPro" id="IPR036291">
    <property type="entry name" value="NAD(P)-bd_dom_sf"/>
</dbReference>
<dbReference type="NCBIfam" id="TIGR00465">
    <property type="entry name" value="ilvC"/>
    <property type="match status" value="1"/>
</dbReference>
<dbReference type="PANTHER" id="PTHR21371">
    <property type="entry name" value="KETOL-ACID REDUCTOISOMERASE, MITOCHONDRIAL"/>
    <property type="match status" value="1"/>
</dbReference>
<dbReference type="PANTHER" id="PTHR21371:SF1">
    <property type="entry name" value="KETOL-ACID REDUCTOISOMERASE, MITOCHONDRIAL"/>
    <property type="match status" value="1"/>
</dbReference>
<dbReference type="Pfam" id="PF01450">
    <property type="entry name" value="KARI_C"/>
    <property type="match status" value="1"/>
</dbReference>
<dbReference type="Pfam" id="PF07991">
    <property type="entry name" value="KARI_N"/>
    <property type="match status" value="1"/>
</dbReference>
<dbReference type="PIRSF" id="PIRSF000116">
    <property type="entry name" value="IlvC_gammaproteo"/>
    <property type="match status" value="1"/>
</dbReference>
<dbReference type="SUPFAM" id="SSF48179">
    <property type="entry name" value="6-phosphogluconate dehydrogenase C-terminal domain-like"/>
    <property type="match status" value="2"/>
</dbReference>
<dbReference type="SUPFAM" id="SSF51735">
    <property type="entry name" value="NAD(P)-binding Rossmann-fold domains"/>
    <property type="match status" value="1"/>
</dbReference>
<dbReference type="PROSITE" id="PS51851">
    <property type="entry name" value="KARI_C"/>
    <property type="match status" value="2"/>
</dbReference>
<dbReference type="PROSITE" id="PS51850">
    <property type="entry name" value="KARI_N"/>
    <property type="match status" value="1"/>
</dbReference>
<comment type="function">
    <text evidence="1">Involved in the biosynthesis of branched-chain amino acids (BCAA). Catalyzes an alkyl-migration followed by a ketol-acid reduction of (S)-2-acetolactate (S2AL) to yield (R)-2,3-dihydroxy-isovalerate. In the isomerase reaction, S2AL is rearranged via a Mg-dependent methyl migration to produce 3-hydroxy-3-methyl-2-ketobutyrate (HMKB). In the reductase reaction, this 2-ketoacid undergoes a metal-dependent reduction by NADPH to yield (R)-2,3-dihydroxy-isovalerate.</text>
</comment>
<comment type="catalytic activity">
    <reaction evidence="1">
        <text>(2R)-2,3-dihydroxy-3-methylbutanoate + NADP(+) = (2S)-2-acetolactate + NADPH + H(+)</text>
        <dbReference type="Rhea" id="RHEA:22068"/>
        <dbReference type="ChEBI" id="CHEBI:15378"/>
        <dbReference type="ChEBI" id="CHEBI:49072"/>
        <dbReference type="ChEBI" id="CHEBI:57783"/>
        <dbReference type="ChEBI" id="CHEBI:58349"/>
        <dbReference type="ChEBI" id="CHEBI:58476"/>
        <dbReference type="EC" id="1.1.1.86"/>
    </reaction>
</comment>
<comment type="catalytic activity">
    <reaction evidence="1">
        <text>(2R,3R)-2,3-dihydroxy-3-methylpentanoate + NADP(+) = (S)-2-ethyl-2-hydroxy-3-oxobutanoate + NADPH + H(+)</text>
        <dbReference type="Rhea" id="RHEA:13493"/>
        <dbReference type="ChEBI" id="CHEBI:15378"/>
        <dbReference type="ChEBI" id="CHEBI:49256"/>
        <dbReference type="ChEBI" id="CHEBI:49258"/>
        <dbReference type="ChEBI" id="CHEBI:57783"/>
        <dbReference type="ChEBI" id="CHEBI:58349"/>
        <dbReference type="EC" id="1.1.1.86"/>
    </reaction>
</comment>
<comment type="cofactor">
    <cofactor evidence="1">
        <name>Mg(2+)</name>
        <dbReference type="ChEBI" id="CHEBI:18420"/>
    </cofactor>
    <text evidence="1">Binds 2 magnesium ions per subunit.</text>
</comment>
<comment type="pathway">
    <text evidence="1">Amino-acid biosynthesis; L-isoleucine biosynthesis; L-isoleucine from 2-oxobutanoate: step 2/4.</text>
</comment>
<comment type="pathway">
    <text evidence="1">Amino-acid biosynthesis; L-valine biosynthesis; L-valine from pyruvate: step 2/4.</text>
</comment>
<comment type="similarity">
    <text evidence="4">Belongs to the ketol-acid reductoisomerase family.</text>
</comment>
<keyword id="KW-0028">Amino-acid biosynthesis</keyword>
<keyword id="KW-0100">Branched-chain amino acid biosynthesis</keyword>
<keyword id="KW-0460">Magnesium</keyword>
<keyword id="KW-0479">Metal-binding</keyword>
<keyword id="KW-0521">NADP</keyword>
<keyword id="KW-0560">Oxidoreductase</keyword>
<keyword id="KW-0677">Repeat</keyword>
<sequence length="346" mass="39427">KKNSILKKNQSWINATQNNFKVDDYESLIPNADLVINLTPDKQHHNVIKTLQKLMKKNSCLGYSHGFNIVEFGETIRKDITVIMVAPKCPGTEVREEYKRGFGVPTLIAVHDKNDIHQQGLDIAKAWSFSIGAHHAGVLESSFVAEVKSDLMGEQTILCGMLQTASLLCYDKLIQNKCDPAYASKLIQHGWETITESLKHGGITLMMDRLSNSXKIRAYKISEKIKKILSPLFQKHMDDIISGEFSSEMMKDWSNNDKKLLDCRRKIKNTSFEQSPIYKEKIPEQEYYDHGILMIAILKSGIELSFEKMITAGIIEESAYYESLHELPLIANTISRKKLYEMNKVI</sequence>
<accession>Q9AQ98</accession>